<keyword id="KW-0106">Calcium</keyword>
<keyword id="KW-0186">Copper</keyword>
<keyword id="KW-0249">Electron transport</keyword>
<keyword id="KW-0349">Heme</keyword>
<keyword id="KW-0408">Iron</keyword>
<keyword id="KW-0460">Magnesium</keyword>
<keyword id="KW-0472">Membrane</keyword>
<keyword id="KW-0479">Metal-binding</keyword>
<keyword id="KW-0496">Mitochondrion</keyword>
<keyword id="KW-0999">Mitochondrion inner membrane</keyword>
<keyword id="KW-1185">Reference proteome</keyword>
<keyword id="KW-0679">Respiratory chain</keyword>
<keyword id="KW-0915">Sodium</keyword>
<keyword id="KW-1278">Translocase</keyword>
<keyword id="KW-0812">Transmembrane</keyword>
<keyword id="KW-1133">Transmembrane helix</keyword>
<keyword id="KW-0813">Transport</keyword>
<accession>P92692</accession>
<feature type="chain" id="PRO_0000183402" description="Cytochrome c oxidase subunit 1">
    <location>
        <begin position="1"/>
        <end position="514"/>
    </location>
</feature>
<feature type="topological domain" description="Mitochondrial matrix" evidence="2">
    <location>
        <begin position="1"/>
        <end position="11"/>
    </location>
</feature>
<feature type="transmembrane region" description="Helical; Name=I" evidence="2">
    <location>
        <begin position="12"/>
        <end position="40"/>
    </location>
</feature>
<feature type="topological domain" description="Mitochondrial intermembrane" evidence="2">
    <location>
        <begin position="41"/>
        <end position="50"/>
    </location>
</feature>
<feature type="transmembrane region" description="Helical; Name=II" evidence="2">
    <location>
        <begin position="51"/>
        <end position="86"/>
    </location>
</feature>
<feature type="topological domain" description="Mitochondrial matrix" evidence="2">
    <location>
        <begin position="87"/>
        <end position="94"/>
    </location>
</feature>
<feature type="transmembrane region" description="Helical; Name=III" evidence="2">
    <location>
        <begin position="95"/>
        <end position="117"/>
    </location>
</feature>
<feature type="topological domain" description="Mitochondrial intermembrane" evidence="2">
    <location>
        <begin position="118"/>
        <end position="140"/>
    </location>
</feature>
<feature type="transmembrane region" description="Helical; Name=IV" evidence="2">
    <location>
        <begin position="141"/>
        <end position="170"/>
    </location>
</feature>
<feature type="topological domain" description="Mitochondrial matrix" evidence="2">
    <location>
        <begin position="171"/>
        <end position="182"/>
    </location>
</feature>
<feature type="transmembrane region" description="Helical; Name=V" evidence="2">
    <location>
        <begin position="183"/>
        <end position="212"/>
    </location>
</feature>
<feature type="topological domain" description="Mitochondrial intermembrane" evidence="2">
    <location>
        <begin position="213"/>
        <end position="227"/>
    </location>
</feature>
<feature type="transmembrane region" description="Helical; Name=VI" evidence="2">
    <location>
        <begin position="228"/>
        <end position="261"/>
    </location>
</feature>
<feature type="topological domain" description="Mitochondrial matrix" evidence="2">
    <location>
        <begin position="262"/>
        <end position="269"/>
    </location>
</feature>
<feature type="transmembrane region" description="Helical; Name=VII" evidence="2">
    <location>
        <begin position="270"/>
        <end position="286"/>
    </location>
</feature>
<feature type="topological domain" description="Mitochondrial intermembrane" evidence="2">
    <location>
        <begin position="287"/>
        <end position="298"/>
    </location>
</feature>
<feature type="transmembrane region" description="Helical; Name=VIII" evidence="2">
    <location>
        <begin position="299"/>
        <end position="327"/>
    </location>
</feature>
<feature type="topological domain" description="Mitochondrial matrix" evidence="2">
    <location>
        <begin position="328"/>
        <end position="335"/>
    </location>
</feature>
<feature type="transmembrane region" description="Helical; Name=IX" evidence="2">
    <location>
        <begin position="336"/>
        <end position="357"/>
    </location>
</feature>
<feature type="topological domain" description="Mitochondrial intermembrane" evidence="2">
    <location>
        <begin position="358"/>
        <end position="370"/>
    </location>
</feature>
<feature type="transmembrane region" description="Helical; Name=X" evidence="2">
    <location>
        <begin position="371"/>
        <end position="400"/>
    </location>
</feature>
<feature type="topological domain" description="Mitochondrial matrix" evidence="2">
    <location>
        <begin position="401"/>
        <end position="406"/>
    </location>
</feature>
<feature type="transmembrane region" description="Helical; Name=XI" evidence="2">
    <location>
        <begin position="407"/>
        <end position="433"/>
    </location>
</feature>
<feature type="topological domain" description="Mitochondrial intermembrane" evidence="2">
    <location>
        <begin position="434"/>
        <end position="446"/>
    </location>
</feature>
<feature type="transmembrane region" description="Helical; Name=XII" evidence="2">
    <location>
        <begin position="447"/>
        <end position="478"/>
    </location>
</feature>
<feature type="topological domain" description="Mitochondrial matrix" evidence="2">
    <location>
        <begin position="479"/>
        <end position="514"/>
    </location>
</feature>
<feature type="binding site" evidence="2">
    <location>
        <position position="40"/>
    </location>
    <ligand>
        <name>Na(+)</name>
        <dbReference type="ChEBI" id="CHEBI:29101"/>
    </ligand>
</feature>
<feature type="binding site" evidence="2">
    <location>
        <position position="45"/>
    </location>
    <ligand>
        <name>Na(+)</name>
        <dbReference type="ChEBI" id="CHEBI:29101"/>
    </ligand>
</feature>
<feature type="binding site" description="axial binding residue" evidence="2">
    <location>
        <position position="61"/>
    </location>
    <ligand>
        <name>Fe(II)-heme a</name>
        <dbReference type="ChEBI" id="CHEBI:61715"/>
        <note>low-spin</note>
    </ligand>
    <ligandPart>
        <name>Fe</name>
        <dbReference type="ChEBI" id="CHEBI:18248"/>
    </ligandPart>
</feature>
<feature type="binding site" evidence="2">
    <location>
        <position position="240"/>
    </location>
    <ligand>
        <name>Cu cation</name>
        <dbReference type="ChEBI" id="CHEBI:23378"/>
        <label>B</label>
    </ligand>
</feature>
<feature type="binding site" evidence="2">
    <location>
        <position position="244"/>
    </location>
    <ligand>
        <name>O2</name>
        <dbReference type="ChEBI" id="CHEBI:15379"/>
    </ligand>
</feature>
<feature type="binding site" evidence="2">
    <location>
        <position position="290"/>
    </location>
    <ligand>
        <name>Cu cation</name>
        <dbReference type="ChEBI" id="CHEBI:23378"/>
        <label>B</label>
    </ligand>
</feature>
<feature type="binding site" evidence="2">
    <location>
        <position position="291"/>
    </location>
    <ligand>
        <name>Cu cation</name>
        <dbReference type="ChEBI" id="CHEBI:23378"/>
        <label>B</label>
    </ligand>
</feature>
<feature type="binding site" evidence="2">
    <location>
        <position position="368"/>
    </location>
    <ligand>
        <name>Mg(2+)</name>
        <dbReference type="ChEBI" id="CHEBI:18420"/>
        <note>ligand shared with MT-CO2</note>
    </ligand>
</feature>
<feature type="binding site" evidence="2">
    <location>
        <position position="369"/>
    </location>
    <ligand>
        <name>Mg(2+)</name>
        <dbReference type="ChEBI" id="CHEBI:18420"/>
        <note>ligand shared with MT-CO2</note>
    </ligand>
</feature>
<feature type="binding site" description="axial binding residue" evidence="2">
    <location>
        <position position="376"/>
    </location>
    <ligand>
        <name>heme a3</name>
        <dbReference type="ChEBI" id="CHEBI:83282"/>
        <note>high-spin</note>
    </ligand>
    <ligandPart>
        <name>Fe</name>
        <dbReference type="ChEBI" id="CHEBI:18248"/>
    </ligandPart>
</feature>
<feature type="binding site" description="axial binding residue" evidence="2">
    <location>
        <position position="378"/>
    </location>
    <ligand>
        <name>Fe(II)-heme a</name>
        <dbReference type="ChEBI" id="CHEBI:61715"/>
        <note>low-spin</note>
    </ligand>
    <ligandPart>
        <name>Fe</name>
        <dbReference type="ChEBI" id="CHEBI:18248"/>
    </ligandPart>
</feature>
<feature type="binding site" evidence="2">
    <location>
        <position position="441"/>
    </location>
    <ligand>
        <name>Na(+)</name>
        <dbReference type="ChEBI" id="CHEBI:29101"/>
    </ligand>
</feature>
<feature type="cross-link" description="1'-histidyl-3'-tyrosine (His-Tyr)" evidence="2">
    <location>
        <begin position="240"/>
        <end position="244"/>
    </location>
</feature>
<reference key="1">
    <citation type="journal article" date="1996" name="J. Mol. Evol.">
        <title>The mitochondrial DNA molecule of Sumatran orangutan and a molecular proposal for two (Bornean and Sumatran) species of orangutan.</title>
        <authorList>
            <person name="Xu X."/>
            <person name="Arnason U."/>
        </authorList>
    </citation>
    <scope>NUCLEOTIDE SEQUENCE [LARGE SCALE GENOMIC DNA]</scope>
</reference>
<geneLocation type="mitochondrion"/>
<dbReference type="EC" id="7.1.1.9"/>
<dbReference type="EMBL" id="X97707">
    <property type="protein sequence ID" value="CAA66285.1"/>
    <property type="molecule type" value="Genomic_DNA"/>
</dbReference>
<dbReference type="RefSeq" id="NP_007837.1">
    <property type="nucleotide sequence ID" value="NC_002083.1"/>
</dbReference>
<dbReference type="SMR" id="P92692"/>
<dbReference type="FunCoup" id="P92692">
    <property type="interactions" value="219"/>
</dbReference>
<dbReference type="STRING" id="9601.ENSPPYP00000023441"/>
<dbReference type="Ensembl" id="ENSPPYT00000024434.1">
    <property type="protein sequence ID" value="ENSPPYP00000023441.1"/>
    <property type="gene ID" value="ENSPPYG00000020955.1"/>
</dbReference>
<dbReference type="GeneID" id="808482"/>
<dbReference type="KEGG" id="pon:808482"/>
<dbReference type="CTD" id="4512"/>
<dbReference type="eggNOG" id="KOG4769">
    <property type="taxonomic scope" value="Eukaryota"/>
</dbReference>
<dbReference type="GeneTree" id="ENSGT00390000001518"/>
<dbReference type="HOGENOM" id="CLU_011899_7_3_1"/>
<dbReference type="InParanoid" id="P92692"/>
<dbReference type="OMA" id="WAMMSIG"/>
<dbReference type="TreeFam" id="TF353096"/>
<dbReference type="UniPathway" id="UPA00705"/>
<dbReference type="Proteomes" id="UP000001595">
    <property type="component" value="Mitochondrion"/>
</dbReference>
<dbReference type="GO" id="GO:0005743">
    <property type="term" value="C:mitochondrial inner membrane"/>
    <property type="evidence" value="ECO:0007669"/>
    <property type="project" value="UniProtKB-SubCell"/>
</dbReference>
<dbReference type="GO" id="GO:0045277">
    <property type="term" value="C:respiratory chain complex IV"/>
    <property type="evidence" value="ECO:0000250"/>
    <property type="project" value="UniProtKB"/>
</dbReference>
<dbReference type="GO" id="GO:0004129">
    <property type="term" value="F:cytochrome-c oxidase activity"/>
    <property type="evidence" value="ECO:0007669"/>
    <property type="project" value="UniProtKB-EC"/>
</dbReference>
<dbReference type="GO" id="GO:0020037">
    <property type="term" value="F:heme binding"/>
    <property type="evidence" value="ECO:0007669"/>
    <property type="project" value="InterPro"/>
</dbReference>
<dbReference type="GO" id="GO:0046872">
    <property type="term" value="F:metal ion binding"/>
    <property type="evidence" value="ECO:0007669"/>
    <property type="project" value="UniProtKB-KW"/>
</dbReference>
<dbReference type="GO" id="GO:0015990">
    <property type="term" value="P:electron transport coupled proton transport"/>
    <property type="evidence" value="ECO:0007669"/>
    <property type="project" value="TreeGrafter"/>
</dbReference>
<dbReference type="GO" id="GO:0006123">
    <property type="term" value="P:mitochondrial electron transport, cytochrome c to oxygen"/>
    <property type="evidence" value="ECO:0007669"/>
    <property type="project" value="TreeGrafter"/>
</dbReference>
<dbReference type="CDD" id="cd01663">
    <property type="entry name" value="Cyt_c_Oxidase_I"/>
    <property type="match status" value="1"/>
</dbReference>
<dbReference type="FunFam" id="1.20.210.10:FF:000001">
    <property type="entry name" value="Cytochrome c oxidase subunit 1"/>
    <property type="match status" value="1"/>
</dbReference>
<dbReference type="Gene3D" id="1.20.210.10">
    <property type="entry name" value="Cytochrome c oxidase-like, subunit I domain"/>
    <property type="match status" value="1"/>
</dbReference>
<dbReference type="InterPro" id="IPR023616">
    <property type="entry name" value="Cyt_c_oxase-like_su1_dom"/>
</dbReference>
<dbReference type="InterPro" id="IPR036927">
    <property type="entry name" value="Cyt_c_oxase-like_su1_sf"/>
</dbReference>
<dbReference type="InterPro" id="IPR000883">
    <property type="entry name" value="Cyt_C_Oxase_1"/>
</dbReference>
<dbReference type="InterPro" id="IPR023615">
    <property type="entry name" value="Cyt_c_Oxase_su1_BS"/>
</dbReference>
<dbReference type="InterPro" id="IPR033944">
    <property type="entry name" value="Cyt_c_oxase_su1_dom"/>
</dbReference>
<dbReference type="PANTHER" id="PTHR10422">
    <property type="entry name" value="CYTOCHROME C OXIDASE SUBUNIT 1"/>
    <property type="match status" value="1"/>
</dbReference>
<dbReference type="PANTHER" id="PTHR10422:SF18">
    <property type="entry name" value="CYTOCHROME C OXIDASE SUBUNIT 1"/>
    <property type="match status" value="1"/>
</dbReference>
<dbReference type="Pfam" id="PF00115">
    <property type="entry name" value="COX1"/>
    <property type="match status" value="1"/>
</dbReference>
<dbReference type="PRINTS" id="PR01165">
    <property type="entry name" value="CYCOXIDASEI"/>
</dbReference>
<dbReference type="SUPFAM" id="SSF81442">
    <property type="entry name" value="Cytochrome c oxidase subunit I-like"/>
    <property type="match status" value="1"/>
</dbReference>
<dbReference type="PROSITE" id="PS50855">
    <property type="entry name" value="COX1"/>
    <property type="match status" value="1"/>
</dbReference>
<dbReference type="PROSITE" id="PS00077">
    <property type="entry name" value="COX1_CUB"/>
    <property type="match status" value="1"/>
</dbReference>
<protein>
    <recommendedName>
        <fullName>Cytochrome c oxidase subunit 1</fullName>
        <ecNumber>7.1.1.9</ecNumber>
    </recommendedName>
    <alternativeName>
        <fullName>Cytochrome c oxidase polypeptide I</fullName>
    </alternativeName>
</protein>
<sequence>MFADRWLFSTNHKDIGTLYLLFGAWAGVLGTALSLLIRAELGQPGNLLGNDHIYNVIVTAHAFVMIFFMVMPIMIGGFGNWLVPLMIGAPDMAFPRMNNMSFWLLPPSFLLLLASATVEAGAGTGWTVYPPLAGNYSHPGASVDLTIFSLHLAGISSILGAINFITTIINMKPPAMSQYQTPLFVWSVLITAVLLLLSLPVLAAGITMLLTDRNLNTTFFDPAGGGDPILYQHLFWFFGHPEVYILILPGFGMISHIVTHYSGKEEPFGYMGMVWAMVSIGFLGFIVWAHHMFTVGMDVDTRAYFTSATMIIAIPTGVKVFSWLATLHGSNTKWSAAILWALGFIFLFTVGGLTGIVLANSSLDIVLHDTYYVVAHFHYVLSMGAVFAIMGGFIHWFPLFSGYTLDQTYAKIHFITMFIGVNLTFFPQHFLGLSGMPRRYSDYPDAYTTWNILSSAGSFISLTAVMLMIFMIWEAFASKRKVPMVEQPSTSLEWLYGCPPPYHTFEEPVYMKPE</sequence>
<organism>
    <name type="scientific">Pongo abelii</name>
    <name type="common">Sumatran orangutan</name>
    <name type="synonym">Pongo pygmaeus abelii</name>
    <dbReference type="NCBI Taxonomy" id="9601"/>
    <lineage>
        <taxon>Eukaryota</taxon>
        <taxon>Metazoa</taxon>
        <taxon>Chordata</taxon>
        <taxon>Craniata</taxon>
        <taxon>Vertebrata</taxon>
        <taxon>Euteleostomi</taxon>
        <taxon>Mammalia</taxon>
        <taxon>Eutheria</taxon>
        <taxon>Euarchontoglires</taxon>
        <taxon>Primates</taxon>
        <taxon>Haplorrhini</taxon>
        <taxon>Catarrhini</taxon>
        <taxon>Hominidae</taxon>
        <taxon>Pongo</taxon>
    </lineage>
</organism>
<evidence type="ECO:0000250" key="1">
    <source>
        <dbReference type="UniProtKB" id="P00395"/>
    </source>
</evidence>
<evidence type="ECO:0000250" key="2">
    <source>
        <dbReference type="UniProtKB" id="P00396"/>
    </source>
</evidence>
<evidence type="ECO:0000250" key="3">
    <source>
        <dbReference type="UniProtKB" id="P00401"/>
    </source>
</evidence>
<evidence type="ECO:0000305" key="4"/>
<name>COX1_PONAB</name>
<gene>
    <name type="primary">MT-CO1</name>
    <name type="synonym">COI</name>
    <name type="synonym">COXI</name>
    <name type="synonym">MTCO1</name>
</gene>
<comment type="function">
    <text evidence="3">Component of the cytochrome c oxidase, the last enzyme in the mitochondrial electron transport chain which drives oxidative phosphorylation. The respiratory chain contains 3 multisubunit complexes succinate dehydrogenase (complex II, CII), ubiquinol-cytochrome c oxidoreductase (cytochrome b-c1 complex, complex III, CIII) and cytochrome c oxidase (complex IV, CIV), that cooperate to transfer electrons derived from NADH and succinate to molecular oxygen, creating an electrochemical gradient over the inner membrane that drives transmembrane transport and the ATP synthase. Cytochrome c oxidase is the component of the respiratory chain that catalyzes the reduction of oxygen to water. Electrons originating from reduced cytochrome c in the intermembrane space (IMS) are transferred via the dinuclear copper A center (CU(A)) of subunit 2 and heme A of subunit 1 to the active site in subunit 1, a binuclear center (BNC) formed by heme A3 and copper B (CU(B)). The BNC reduces molecular oxygen to 2 water molecules using 4 electrons from cytochrome c in the IMS and 4 protons from the mitochondrial matrix.</text>
</comment>
<comment type="catalytic activity">
    <reaction evidence="3">
        <text>4 Fe(II)-[cytochrome c] + O2 + 8 H(+)(in) = 4 Fe(III)-[cytochrome c] + 2 H2O + 4 H(+)(out)</text>
        <dbReference type="Rhea" id="RHEA:11436"/>
        <dbReference type="Rhea" id="RHEA-COMP:10350"/>
        <dbReference type="Rhea" id="RHEA-COMP:14399"/>
        <dbReference type="ChEBI" id="CHEBI:15377"/>
        <dbReference type="ChEBI" id="CHEBI:15378"/>
        <dbReference type="ChEBI" id="CHEBI:15379"/>
        <dbReference type="ChEBI" id="CHEBI:29033"/>
        <dbReference type="ChEBI" id="CHEBI:29034"/>
        <dbReference type="EC" id="7.1.1.9"/>
    </reaction>
    <physiologicalReaction direction="left-to-right" evidence="3">
        <dbReference type="Rhea" id="RHEA:11437"/>
    </physiologicalReaction>
</comment>
<comment type="cofactor">
    <cofactor evidence="2">
        <name>heme</name>
        <dbReference type="ChEBI" id="CHEBI:30413"/>
    </cofactor>
    <text evidence="2">Binds 2 heme A groups non-covalently per subunit.</text>
</comment>
<comment type="cofactor">
    <cofactor evidence="2">
        <name>Cu cation</name>
        <dbReference type="ChEBI" id="CHEBI:23378"/>
    </cofactor>
    <text evidence="2">Binds a copper B center.</text>
</comment>
<comment type="pathway">
    <text evidence="3">Energy metabolism; oxidative phosphorylation.</text>
</comment>
<comment type="subunit">
    <text evidence="1 2">Component of the cytochrome c oxidase (complex IV, CIV), a multisubunit enzyme composed of 14 subunits. The complex is composed of a catalytic core of 3 subunits MT-CO1, MT-CO2 and MT-CO3, encoded in the mitochondrial DNA, and 11 supernumerary subunits COX4I, COX5A, COX5B, COX6A, COX6B, COX6C, COX7A, COX7B, COX7C, COX8 and NDUFA4, which are encoded in the nuclear genome. The complex exists as a monomer or a dimer and forms supercomplexes (SCs) in the inner mitochondrial membrane with NADH-ubiquinone oxidoreductase (complex I, CI) and ubiquinol-cytochrome c oxidoreductase (cytochrome b-c1 complex, complex III, CIII), resulting in different assemblies (supercomplex SCI(1)III(2)IV(1) and megacomplex MCI(2)III(2)IV(2)) (By similarity). As a newly synthesized protein, rapidly incorporates into a multi-subunit assembly intermediate in the inner membrane, called MITRAC (mitochondrial translation regulation assembly intermediate of cytochrome c oxidase) complex, whose core components are COA3/MITRAC12 and COX14. Within the MITRAC complex, interacts with COA3 and with SMIM20/MITRAC7; the interaction with SMIM20 stabilizes the newly synthesized MT-CO1 and prevents its premature turnover. Interacts with TMEM177 in a COX20-dependent manner (By similarity).</text>
</comment>
<comment type="subcellular location">
    <subcellularLocation>
        <location evidence="2">Mitochondrion inner membrane</location>
        <topology evidence="2">Multi-pass membrane protein</topology>
    </subcellularLocation>
</comment>
<comment type="similarity">
    <text evidence="4">Belongs to the heme-copper respiratory oxidase family.</text>
</comment>
<proteinExistence type="inferred from homology"/>